<accession>B5R917</accession>
<proteinExistence type="inferred from homology"/>
<comment type="function">
    <text evidence="1">Hydrolyzes ribosome-free peptidyl-tRNAs (with 1 or more amino acids incorporated), which drop off the ribosome during protein synthesis, or as a result of ribosome stalling.</text>
</comment>
<comment type="function">
    <text evidence="1">Catalyzes the release of premature peptidyl moieties from peptidyl-tRNA molecules trapped in stalled 50S ribosomal subunits, and thus maintains levels of free tRNAs and 50S ribosomes.</text>
</comment>
<comment type="catalytic activity">
    <reaction evidence="1">
        <text>an N-acyl-L-alpha-aminoacyl-tRNA + H2O = an N-acyl-L-amino acid + a tRNA + H(+)</text>
        <dbReference type="Rhea" id="RHEA:54448"/>
        <dbReference type="Rhea" id="RHEA-COMP:10123"/>
        <dbReference type="Rhea" id="RHEA-COMP:13883"/>
        <dbReference type="ChEBI" id="CHEBI:15377"/>
        <dbReference type="ChEBI" id="CHEBI:15378"/>
        <dbReference type="ChEBI" id="CHEBI:59874"/>
        <dbReference type="ChEBI" id="CHEBI:78442"/>
        <dbReference type="ChEBI" id="CHEBI:138191"/>
        <dbReference type="EC" id="3.1.1.29"/>
    </reaction>
</comment>
<comment type="subunit">
    <text evidence="1">Monomer.</text>
</comment>
<comment type="subcellular location">
    <subcellularLocation>
        <location evidence="1">Cytoplasm</location>
    </subcellularLocation>
</comment>
<comment type="similarity">
    <text evidence="1">Belongs to the PTH family.</text>
</comment>
<feature type="chain" id="PRO_1000092981" description="Peptidyl-tRNA hydrolase">
    <location>
        <begin position="1"/>
        <end position="194"/>
    </location>
</feature>
<feature type="active site" description="Proton acceptor" evidence="1">
    <location>
        <position position="21"/>
    </location>
</feature>
<feature type="binding site" evidence="1">
    <location>
        <position position="16"/>
    </location>
    <ligand>
        <name>tRNA</name>
        <dbReference type="ChEBI" id="CHEBI:17843"/>
    </ligand>
</feature>
<feature type="binding site" evidence="1">
    <location>
        <position position="67"/>
    </location>
    <ligand>
        <name>tRNA</name>
        <dbReference type="ChEBI" id="CHEBI:17843"/>
    </ligand>
</feature>
<feature type="binding site" evidence="1">
    <location>
        <position position="69"/>
    </location>
    <ligand>
        <name>tRNA</name>
        <dbReference type="ChEBI" id="CHEBI:17843"/>
    </ligand>
</feature>
<feature type="binding site" evidence="1">
    <location>
        <position position="115"/>
    </location>
    <ligand>
        <name>tRNA</name>
        <dbReference type="ChEBI" id="CHEBI:17843"/>
    </ligand>
</feature>
<feature type="site" description="Discriminates between blocked and unblocked aminoacyl-tRNA" evidence="1">
    <location>
        <position position="11"/>
    </location>
</feature>
<feature type="site" description="Stabilizes the basic form of H active site to accept a proton" evidence="1">
    <location>
        <position position="94"/>
    </location>
</feature>
<protein>
    <recommendedName>
        <fullName evidence="1">Peptidyl-tRNA hydrolase</fullName>
        <shortName evidence="1">Pth</shortName>
        <ecNumber evidence="1">3.1.1.29</ecNumber>
    </recommendedName>
</protein>
<dbReference type="EC" id="3.1.1.29" evidence="1"/>
<dbReference type="EMBL" id="AM933173">
    <property type="protein sequence ID" value="CAR37210.1"/>
    <property type="molecule type" value="Genomic_DNA"/>
</dbReference>
<dbReference type="RefSeq" id="WP_000985595.1">
    <property type="nucleotide sequence ID" value="NC_011274.1"/>
</dbReference>
<dbReference type="SMR" id="B5R917"/>
<dbReference type="KEGG" id="seg:SG1334"/>
<dbReference type="HOGENOM" id="CLU_062456_3_1_6"/>
<dbReference type="Proteomes" id="UP000008321">
    <property type="component" value="Chromosome"/>
</dbReference>
<dbReference type="GO" id="GO:0005737">
    <property type="term" value="C:cytoplasm"/>
    <property type="evidence" value="ECO:0007669"/>
    <property type="project" value="UniProtKB-SubCell"/>
</dbReference>
<dbReference type="GO" id="GO:0004045">
    <property type="term" value="F:peptidyl-tRNA hydrolase activity"/>
    <property type="evidence" value="ECO:0007669"/>
    <property type="project" value="UniProtKB-UniRule"/>
</dbReference>
<dbReference type="GO" id="GO:0000049">
    <property type="term" value="F:tRNA binding"/>
    <property type="evidence" value="ECO:0007669"/>
    <property type="project" value="UniProtKB-UniRule"/>
</dbReference>
<dbReference type="GO" id="GO:0006515">
    <property type="term" value="P:protein quality control for misfolded or incompletely synthesized proteins"/>
    <property type="evidence" value="ECO:0007669"/>
    <property type="project" value="UniProtKB-UniRule"/>
</dbReference>
<dbReference type="GO" id="GO:0072344">
    <property type="term" value="P:rescue of stalled ribosome"/>
    <property type="evidence" value="ECO:0007669"/>
    <property type="project" value="UniProtKB-UniRule"/>
</dbReference>
<dbReference type="CDD" id="cd00462">
    <property type="entry name" value="PTH"/>
    <property type="match status" value="1"/>
</dbReference>
<dbReference type="FunFam" id="3.40.50.1470:FF:000001">
    <property type="entry name" value="Peptidyl-tRNA hydrolase"/>
    <property type="match status" value="1"/>
</dbReference>
<dbReference type="Gene3D" id="3.40.50.1470">
    <property type="entry name" value="Peptidyl-tRNA hydrolase"/>
    <property type="match status" value="1"/>
</dbReference>
<dbReference type="HAMAP" id="MF_00083">
    <property type="entry name" value="Pept_tRNA_hydro_bact"/>
    <property type="match status" value="1"/>
</dbReference>
<dbReference type="InterPro" id="IPR001328">
    <property type="entry name" value="Pept_tRNA_hydro"/>
</dbReference>
<dbReference type="InterPro" id="IPR018171">
    <property type="entry name" value="Pept_tRNA_hydro_CS"/>
</dbReference>
<dbReference type="InterPro" id="IPR036416">
    <property type="entry name" value="Pept_tRNA_hydro_sf"/>
</dbReference>
<dbReference type="NCBIfam" id="TIGR00447">
    <property type="entry name" value="pth"/>
    <property type="match status" value="1"/>
</dbReference>
<dbReference type="PANTHER" id="PTHR17224">
    <property type="entry name" value="PEPTIDYL-TRNA HYDROLASE"/>
    <property type="match status" value="1"/>
</dbReference>
<dbReference type="PANTHER" id="PTHR17224:SF1">
    <property type="entry name" value="PEPTIDYL-TRNA HYDROLASE"/>
    <property type="match status" value="1"/>
</dbReference>
<dbReference type="Pfam" id="PF01195">
    <property type="entry name" value="Pept_tRNA_hydro"/>
    <property type="match status" value="1"/>
</dbReference>
<dbReference type="SUPFAM" id="SSF53178">
    <property type="entry name" value="Peptidyl-tRNA hydrolase-like"/>
    <property type="match status" value="1"/>
</dbReference>
<dbReference type="PROSITE" id="PS01195">
    <property type="entry name" value="PEPT_TRNA_HYDROL_1"/>
    <property type="match status" value="1"/>
</dbReference>
<dbReference type="PROSITE" id="PS01196">
    <property type="entry name" value="PEPT_TRNA_HYDROL_2"/>
    <property type="match status" value="1"/>
</dbReference>
<organism>
    <name type="scientific">Salmonella gallinarum (strain 287/91 / NCTC 13346)</name>
    <dbReference type="NCBI Taxonomy" id="550538"/>
    <lineage>
        <taxon>Bacteria</taxon>
        <taxon>Pseudomonadati</taxon>
        <taxon>Pseudomonadota</taxon>
        <taxon>Gammaproteobacteria</taxon>
        <taxon>Enterobacterales</taxon>
        <taxon>Enterobacteriaceae</taxon>
        <taxon>Salmonella</taxon>
    </lineage>
</organism>
<reference key="1">
    <citation type="journal article" date="2008" name="Genome Res.">
        <title>Comparative genome analysis of Salmonella enteritidis PT4 and Salmonella gallinarum 287/91 provides insights into evolutionary and host adaptation pathways.</title>
        <authorList>
            <person name="Thomson N.R."/>
            <person name="Clayton D.J."/>
            <person name="Windhorst D."/>
            <person name="Vernikos G."/>
            <person name="Davidson S."/>
            <person name="Churcher C."/>
            <person name="Quail M.A."/>
            <person name="Stevens M."/>
            <person name="Jones M.A."/>
            <person name="Watson M."/>
            <person name="Barron A."/>
            <person name="Layton A."/>
            <person name="Pickard D."/>
            <person name="Kingsley R.A."/>
            <person name="Bignell A."/>
            <person name="Clark L."/>
            <person name="Harris B."/>
            <person name="Ormond D."/>
            <person name="Abdellah Z."/>
            <person name="Brooks K."/>
            <person name="Cherevach I."/>
            <person name="Chillingworth T."/>
            <person name="Woodward J."/>
            <person name="Norberczak H."/>
            <person name="Lord A."/>
            <person name="Arrowsmith C."/>
            <person name="Jagels K."/>
            <person name="Moule S."/>
            <person name="Mungall K."/>
            <person name="Saunders M."/>
            <person name="Whitehead S."/>
            <person name="Chabalgoity J.A."/>
            <person name="Maskell D."/>
            <person name="Humphreys T."/>
            <person name="Roberts M."/>
            <person name="Barrow P.A."/>
            <person name="Dougan G."/>
            <person name="Parkhill J."/>
        </authorList>
    </citation>
    <scope>NUCLEOTIDE SEQUENCE [LARGE SCALE GENOMIC DNA]</scope>
    <source>
        <strain>287/91 / NCTC 13346</strain>
    </source>
</reference>
<evidence type="ECO:0000255" key="1">
    <source>
        <dbReference type="HAMAP-Rule" id="MF_00083"/>
    </source>
</evidence>
<sequence length="194" mass="21178">MAIKLIVGLANPGAEYAATRHNAGAWYVDLLAERLRAPLREEPKFFGYTSRITLEGEDVRLLVPTTFMNLSGKAVGAMASFYRIQPDEILVAHDELDLPPGVAKFKLGGGHGGHNGLKDIISKLGNNPNFHRLRVGIGHPGDKNKVVGFVLGKPPVSEQKLIDEAIDEAARCTELWFKEGLAKATSRLHTFKAQ</sequence>
<keyword id="KW-0963">Cytoplasm</keyword>
<keyword id="KW-0378">Hydrolase</keyword>
<keyword id="KW-0694">RNA-binding</keyword>
<keyword id="KW-0820">tRNA-binding</keyword>
<name>PTH_SALG2</name>
<gene>
    <name evidence="1" type="primary">pth</name>
    <name type="ordered locus">SG1334</name>
</gene>